<name>DAPF_ECO24</name>
<proteinExistence type="inferred from homology"/>
<keyword id="KW-0028">Amino-acid biosynthesis</keyword>
<keyword id="KW-0963">Cytoplasm</keyword>
<keyword id="KW-0413">Isomerase</keyword>
<keyword id="KW-0457">Lysine biosynthesis</keyword>
<keyword id="KW-1185">Reference proteome</keyword>
<protein>
    <recommendedName>
        <fullName evidence="1">Diaminopimelate epimerase</fullName>
        <shortName evidence="1">DAP epimerase</shortName>
        <ecNumber evidence="1">5.1.1.7</ecNumber>
    </recommendedName>
    <alternativeName>
        <fullName evidence="1">PLP-independent amino acid racemase</fullName>
    </alternativeName>
</protein>
<dbReference type="EC" id="5.1.1.7" evidence="1"/>
<dbReference type="EMBL" id="CP000800">
    <property type="protein sequence ID" value="ABV20356.1"/>
    <property type="molecule type" value="Genomic_DNA"/>
</dbReference>
<dbReference type="RefSeq" id="WP_001160654.1">
    <property type="nucleotide sequence ID" value="NC_009801.1"/>
</dbReference>
<dbReference type="SMR" id="A7ZU14"/>
<dbReference type="GeneID" id="93778134"/>
<dbReference type="KEGG" id="ecw:EcE24377A_4328"/>
<dbReference type="HOGENOM" id="CLU_053306_1_1_6"/>
<dbReference type="UniPathway" id="UPA00034">
    <property type="reaction ID" value="UER00025"/>
</dbReference>
<dbReference type="Proteomes" id="UP000001122">
    <property type="component" value="Chromosome"/>
</dbReference>
<dbReference type="GO" id="GO:0005829">
    <property type="term" value="C:cytosol"/>
    <property type="evidence" value="ECO:0007669"/>
    <property type="project" value="TreeGrafter"/>
</dbReference>
<dbReference type="GO" id="GO:0008837">
    <property type="term" value="F:diaminopimelate epimerase activity"/>
    <property type="evidence" value="ECO:0007669"/>
    <property type="project" value="UniProtKB-UniRule"/>
</dbReference>
<dbReference type="GO" id="GO:0009089">
    <property type="term" value="P:lysine biosynthetic process via diaminopimelate"/>
    <property type="evidence" value="ECO:0007669"/>
    <property type="project" value="UniProtKB-UniRule"/>
</dbReference>
<dbReference type="FunFam" id="3.10.310.10:FF:000001">
    <property type="entry name" value="Diaminopimelate epimerase"/>
    <property type="match status" value="1"/>
</dbReference>
<dbReference type="FunFam" id="3.10.310.10:FF:000002">
    <property type="entry name" value="Diaminopimelate epimerase"/>
    <property type="match status" value="1"/>
</dbReference>
<dbReference type="Gene3D" id="3.10.310.10">
    <property type="entry name" value="Diaminopimelate Epimerase, Chain A, domain 1"/>
    <property type="match status" value="2"/>
</dbReference>
<dbReference type="HAMAP" id="MF_00197">
    <property type="entry name" value="DAP_epimerase"/>
    <property type="match status" value="1"/>
</dbReference>
<dbReference type="InterPro" id="IPR018510">
    <property type="entry name" value="DAP_epimerase_AS"/>
</dbReference>
<dbReference type="InterPro" id="IPR001653">
    <property type="entry name" value="DAP_epimerase_DapF"/>
</dbReference>
<dbReference type="NCBIfam" id="TIGR00652">
    <property type="entry name" value="DapF"/>
    <property type="match status" value="1"/>
</dbReference>
<dbReference type="PANTHER" id="PTHR31689:SF0">
    <property type="entry name" value="DIAMINOPIMELATE EPIMERASE"/>
    <property type="match status" value="1"/>
</dbReference>
<dbReference type="PANTHER" id="PTHR31689">
    <property type="entry name" value="DIAMINOPIMELATE EPIMERASE, CHLOROPLASTIC"/>
    <property type="match status" value="1"/>
</dbReference>
<dbReference type="Pfam" id="PF01678">
    <property type="entry name" value="DAP_epimerase"/>
    <property type="match status" value="2"/>
</dbReference>
<dbReference type="SUPFAM" id="SSF54506">
    <property type="entry name" value="Diaminopimelate epimerase-like"/>
    <property type="match status" value="1"/>
</dbReference>
<dbReference type="PROSITE" id="PS01326">
    <property type="entry name" value="DAP_EPIMERASE"/>
    <property type="match status" value="1"/>
</dbReference>
<accession>A7ZU14</accession>
<comment type="function">
    <text evidence="1">Catalyzes the stereoinversion of LL-2,6-diaminopimelate (L,L-DAP) to meso-diaminopimelate (meso-DAP), a precursor of L-lysine and an essential component of the bacterial peptidoglycan.</text>
</comment>
<comment type="catalytic activity">
    <reaction evidence="1">
        <text>(2S,6S)-2,6-diaminopimelate = meso-2,6-diaminopimelate</text>
        <dbReference type="Rhea" id="RHEA:15393"/>
        <dbReference type="ChEBI" id="CHEBI:57609"/>
        <dbReference type="ChEBI" id="CHEBI:57791"/>
        <dbReference type="EC" id="5.1.1.7"/>
    </reaction>
</comment>
<comment type="pathway">
    <text evidence="1">Amino-acid biosynthesis; L-lysine biosynthesis via DAP pathway; DL-2,6-diaminopimelate from LL-2,6-diaminopimelate: step 1/1.</text>
</comment>
<comment type="subunit">
    <text evidence="1">Homodimer.</text>
</comment>
<comment type="subcellular location">
    <subcellularLocation>
        <location evidence="1">Cytoplasm</location>
    </subcellularLocation>
</comment>
<comment type="similarity">
    <text evidence="1">Belongs to the diaminopimelate epimerase family.</text>
</comment>
<sequence>MQFSKMHGLGNDFMVVDAVTQNVFFSPELIRRLADRHLGVGFDQLLVVEPPYDPELDFHYRIFNADGSEVAQCGNGARCFARFVRLKGLTNKRDIRVSTANGRMVLTVTDDDLVRVNMGEPNFEPSAVPFRANKAEKTYIMRAAEQTILCGVVSMGNPHCVIQVDDVDTAAVETLGPVLESHERFPERANIGFMQVVKREHIRLRVYERGAGETQACGSGACAAVAVGIQQGLLAEEVRVELPGGRLDIAWKGPGHPLYMTGPAVHVYDGFIHL</sequence>
<reference key="1">
    <citation type="journal article" date="2008" name="J. Bacteriol.">
        <title>The pangenome structure of Escherichia coli: comparative genomic analysis of E. coli commensal and pathogenic isolates.</title>
        <authorList>
            <person name="Rasko D.A."/>
            <person name="Rosovitz M.J."/>
            <person name="Myers G.S.A."/>
            <person name="Mongodin E.F."/>
            <person name="Fricke W.F."/>
            <person name="Gajer P."/>
            <person name="Crabtree J."/>
            <person name="Sebaihia M."/>
            <person name="Thomson N.R."/>
            <person name="Chaudhuri R."/>
            <person name="Henderson I.R."/>
            <person name="Sperandio V."/>
            <person name="Ravel J."/>
        </authorList>
    </citation>
    <scope>NUCLEOTIDE SEQUENCE [LARGE SCALE GENOMIC DNA]</scope>
    <source>
        <strain>E24377A / ETEC</strain>
    </source>
</reference>
<gene>
    <name evidence="1" type="primary">dapF</name>
    <name type="ordered locus">EcE24377A_4328</name>
</gene>
<evidence type="ECO:0000255" key="1">
    <source>
        <dbReference type="HAMAP-Rule" id="MF_00197"/>
    </source>
</evidence>
<feature type="chain" id="PRO_1000058541" description="Diaminopimelate epimerase">
    <location>
        <begin position="1"/>
        <end position="274"/>
    </location>
</feature>
<feature type="active site" description="Proton donor" evidence="1">
    <location>
        <position position="73"/>
    </location>
</feature>
<feature type="active site" description="Proton acceptor" evidence="1">
    <location>
        <position position="217"/>
    </location>
</feature>
<feature type="binding site" evidence="1">
    <location>
        <position position="11"/>
    </location>
    <ligand>
        <name>substrate</name>
    </ligand>
</feature>
<feature type="binding site" evidence="1">
    <location>
        <position position="44"/>
    </location>
    <ligand>
        <name>substrate</name>
    </ligand>
</feature>
<feature type="binding site" evidence="1">
    <location>
        <position position="64"/>
    </location>
    <ligand>
        <name>substrate</name>
    </ligand>
</feature>
<feature type="binding site" evidence="1">
    <location>
        <begin position="74"/>
        <end position="75"/>
    </location>
    <ligand>
        <name>substrate</name>
    </ligand>
</feature>
<feature type="binding site" evidence="1">
    <location>
        <position position="157"/>
    </location>
    <ligand>
        <name>substrate</name>
    </ligand>
</feature>
<feature type="binding site" evidence="1">
    <location>
        <position position="190"/>
    </location>
    <ligand>
        <name>substrate</name>
    </ligand>
</feature>
<feature type="binding site" evidence="1">
    <location>
        <begin position="208"/>
        <end position="209"/>
    </location>
    <ligand>
        <name>substrate</name>
    </ligand>
</feature>
<feature type="binding site" evidence="1">
    <location>
        <begin position="218"/>
        <end position="219"/>
    </location>
    <ligand>
        <name>substrate</name>
    </ligand>
</feature>
<feature type="site" description="Could be important to modulate the pK values of the two catalytic cysteine residues" evidence="1">
    <location>
        <position position="159"/>
    </location>
</feature>
<feature type="site" description="Could be important to modulate the pK values of the two catalytic cysteine residues" evidence="1">
    <location>
        <position position="208"/>
    </location>
</feature>
<feature type="site" description="Important for dimerization" evidence="1">
    <location>
        <position position="268"/>
    </location>
</feature>
<organism>
    <name type="scientific">Escherichia coli O139:H28 (strain E24377A / ETEC)</name>
    <dbReference type="NCBI Taxonomy" id="331111"/>
    <lineage>
        <taxon>Bacteria</taxon>
        <taxon>Pseudomonadati</taxon>
        <taxon>Pseudomonadota</taxon>
        <taxon>Gammaproteobacteria</taxon>
        <taxon>Enterobacterales</taxon>
        <taxon>Enterobacteriaceae</taxon>
        <taxon>Escherichia</taxon>
    </lineage>
</organism>